<dbReference type="EC" id="7.5.2.11" evidence="1"/>
<dbReference type="EMBL" id="AE003852">
    <property type="protein sequence ID" value="AAF94485.1"/>
    <property type="molecule type" value="Genomic_DNA"/>
</dbReference>
<dbReference type="PIR" id="E82214">
    <property type="entry name" value="E82214"/>
</dbReference>
<dbReference type="RefSeq" id="NP_230971.1">
    <property type="nucleotide sequence ID" value="NC_002505.1"/>
</dbReference>
<dbReference type="RefSeq" id="WP_001909557.1">
    <property type="nucleotide sequence ID" value="NZ_LT906614.1"/>
</dbReference>
<dbReference type="SMR" id="Q9KSD1"/>
<dbReference type="STRING" id="243277.VC_1327"/>
<dbReference type="DNASU" id="2614781"/>
<dbReference type="EnsemblBacteria" id="AAF94485">
    <property type="protein sequence ID" value="AAF94485"/>
    <property type="gene ID" value="VC_1327"/>
</dbReference>
<dbReference type="KEGG" id="vch:VC_1327"/>
<dbReference type="PATRIC" id="fig|243277.26.peg.1265"/>
<dbReference type="eggNOG" id="COG1129">
    <property type="taxonomic scope" value="Bacteria"/>
</dbReference>
<dbReference type="HOGENOM" id="CLU_000604_92_3_6"/>
<dbReference type="Proteomes" id="UP000000584">
    <property type="component" value="Chromosome 1"/>
</dbReference>
<dbReference type="GO" id="GO:0005886">
    <property type="term" value="C:plasma membrane"/>
    <property type="evidence" value="ECO:0007669"/>
    <property type="project" value="UniProtKB-SubCell"/>
</dbReference>
<dbReference type="GO" id="GO:0005524">
    <property type="term" value="F:ATP binding"/>
    <property type="evidence" value="ECO:0007669"/>
    <property type="project" value="UniProtKB-KW"/>
</dbReference>
<dbReference type="GO" id="GO:0016887">
    <property type="term" value="F:ATP hydrolysis activity"/>
    <property type="evidence" value="ECO:0007669"/>
    <property type="project" value="InterPro"/>
</dbReference>
<dbReference type="CDD" id="cd03216">
    <property type="entry name" value="ABC_Carb_Monos_I"/>
    <property type="match status" value="1"/>
</dbReference>
<dbReference type="CDD" id="cd03215">
    <property type="entry name" value="ABC_Carb_Monos_II"/>
    <property type="match status" value="1"/>
</dbReference>
<dbReference type="FunFam" id="3.40.50.300:FF:000126">
    <property type="entry name" value="Galactose/methyl galactoside import ATP-binding protein MglA"/>
    <property type="match status" value="1"/>
</dbReference>
<dbReference type="FunFam" id="3.40.50.300:FF:000127">
    <property type="entry name" value="Ribose import ATP-binding protein RbsA"/>
    <property type="match status" value="1"/>
</dbReference>
<dbReference type="Gene3D" id="3.40.50.300">
    <property type="entry name" value="P-loop containing nucleotide triphosphate hydrolases"/>
    <property type="match status" value="2"/>
</dbReference>
<dbReference type="InterPro" id="IPR003593">
    <property type="entry name" value="AAA+_ATPase"/>
</dbReference>
<dbReference type="InterPro" id="IPR050107">
    <property type="entry name" value="ABC_carbohydrate_import_ATPase"/>
</dbReference>
<dbReference type="InterPro" id="IPR003439">
    <property type="entry name" value="ABC_transporter-like_ATP-bd"/>
</dbReference>
<dbReference type="InterPro" id="IPR017871">
    <property type="entry name" value="ABC_transporter-like_CS"/>
</dbReference>
<dbReference type="InterPro" id="IPR027417">
    <property type="entry name" value="P-loop_NTPase"/>
</dbReference>
<dbReference type="NCBIfam" id="NF008215">
    <property type="entry name" value="PRK10982.1"/>
    <property type="match status" value="1"/>
</dbReference>
<dbReference type="PANTHER" id="PTHR43790">
    <property type="entry name" value="CARBOHYDRATE TRANSPORT ATP-BINDING PROTEIN MG119-RELATED"/>
    <property type="match status" value="1"/>
</dbReference>
<dbReference type="PANTHER" id="PTHR43790:SF7">
    <property type="entry name" value="GALACTOSE_METHYL GALACTOSIDE IMPORT ATP-BINDING PROTEIN MGLA"/>
    <property type="match status" value="1"/>
</dbReference>
<dbReference type="Pfam" id="PF00005">
    <property type="entry name" value="ABC_tran"/>
    <property type="match status" value="2"/>
</dbReference>
<dbReference type="SMART" id="SM00382">
    <property type="entry name" value="AAA"/>
    <property type="match status" value="2"/>
</dbReference>
<dbReference type="SUPFAM" id="SSF52540">
    <property type="entry name" value="P-loop containing nucleoside triphosphate hydrolases"/>
    <property type="match status" value="2"/>
</dbReference>
<dbReference type="PROSITE" id="PS00211">
    <property type="entry name" value="ABC_TRANSPORTER_1"/>
    <property type="match status" value="1"/>
</dbReference>
<dbReference type="PROSITE" id="PS50893">
    <property type="entry name" value="ABC_TRANSPORTER_2"/>
    <property type="match status" value="2"/>
</dbReference>
<dbReference type="PROSITE" id="PS51260">
    <property type="entry name" value="MGLA"/>
    <property type="match status" value="1"/>
</dbReference>
<comment type="function">
    <text evidence="1">Part of the ABC transporter complex MglABC involved in galactose/methyl galactoside import. Responsible for energy coupling to the transport system.</text>
</comment>
<comment type="catalytic activity">
    <reaction evidence="1">
        <text>D-galactose(out) + ATP + H2O = D-galactose(in) + ADP + phosphate + H(+)</text>
        <dbReference type="Rhea" id="RHEA:60156"/>
        <dbReference type="ChEBI" id="CHEBI:4139"/>
        <dbReference type="ChEBI" id="CHEBI:15377"/>
        <dbReference type="ChEBI" id="CHEBI:15378"/>
        <dbReference type="ChEBI" id="CHEBI:30616"/>
        <dbReference type="ChEBI" id="CHEBI:43474"/>
        <dbReference type="ChEBI" id="CHEBI:456216"/>
        <dbReference type="EC" id="7.5.2.11"/>
    </reaction>
    <physiologicalReaction direction="left-to-right" evidence="1">
        <dbReference type="Rhea" id="RHEA:60157"/>
    </physiologicalReaction>
</comment>
<comment type="catalytic activity">
    <reaction evidence="1">
        <text>methyl beta-D-galactoside(out) + ATP + H2O = methyl beta-D-galactoside(in) + ADP + phosphate + H(+)</text>
        <dbReference type="Rhea" id="RHEA:72531"/>
        <dbReference type="ChEBI" id="CHEBI:15377"/>
        <dbReference type="ChEBI" id="CHEBI:15378"/>
        <dbReference type="ChEBI" id="CHEBI:17540"/>
        <dbReference type="ChEBI" id="CHEBI:30616"/>
        <dbReference type="ChEBI" id="CHEBI:43474"/>
        <dbReference type="ChEBI" id="CHEBI:456216"/>
    </reaction>
    <physiologicalReaction direction="left-to-right" evidence="1">
        <dbReference type="Rhea" id="RHEA:72532"/>
    </physiologicalReaction>
</comment>
<comment type="subunit">
    <text evidence="1">The complex is composed of one ATP-binding protein (MglA), two transmembrane proteins (MglC) and a solute-binding protein (MglB).</text>
</comment>
<comment type="subcellular location">
    <subcellularLocation>
        <location evidence="1">Cell inner membrane</location>
        <topology evidence="1">Peripheral membrane protein</topology>
    </subcellularLocation>
</comment>
<comment type="similarity">
    <text evidence="1">Belongs to the ABC transporter superfamily. Galactose/methyl galactoside importer (TC 3.A.1.2.3) family.</text>
</comment>
<evidence type="ECO:0000255" key="1">
    <source>
        <dbReference type="HAMAP-Rule" id="MF_01717"/>
    </source>
</evidence>
<feature type="chain" id="PRO_0000261377" description="Galactose/methyl galactoside import ATP-binding protein MglA">
    <location>
        <begin position="1"/>
        <end position="502"/>
    </location>
</feature>
<feature type="domain" description="ABC transporter 1" evidence="1">
    <location>
        <begin position="10"/>
        <end position="245"/>
    </location>
</feature>
<feature type="domain" description="ABC transporter 2" evidence="1">
    <location>
        <begin position="255"/>
        <end position="502"/>
    </location>
</feature>
<feature type="binding site" evidence="1">
    <location>
        <begin position="42"/>
        <end position="49"/>
    </location>
    <ligand>
        <name>ATP</name>
        <dbReference type="ChEBI" id="CHEBI:30616"/>
    </ligand>
</feature>
<organism>
    <name type="scientific">Vibrio cholerae serotype O1 (strain ATCC 39315 / El Tor Inaba N16961)</name>
    <dbReference type="NCBI Taxonomy" id="243277"/>
    <lineage>
        <taxon>Bacteria</taxon>
        <taxon>Pseudomonadati</taxon>
        <taxon>Pseudomonadota</taxon>
        <taxon>Gammaproteobacteria</taxon>
        <taxon>Vibrionales</taxon>
        <taxon>Vibrionaceae</taxon>
        <taxon>Vibrio</taxon>
    </lineage>
</organism>
<protein>
    <recommendedName>
        <fullName evidence="1">Galactose/methyl galactoside import ATP-binding protein MglA</fullName>
        <ecNumber evidence="1">7.5.2.11</ecNumber>
    </recommendedName>
</protein>
<gene>
    <name evidence="1" type="primary">mglA</name>
    <name type="ordered locus">VC_1327</name>
</gene>
<keyword id="KW-0067">ATP-binding</keyword>
<keyword id="KW-0997">Cell inner membrane</keyword>
<keyword id="KW-1003">Cell membrane</keyword>
<keyword id="KW-0472">Membrane</keyword>
<keyword id="KW-0547">Nucleotide-binding</keyword>
<keyword id="KW-1185">Reference proteome</keyword>
<keyword id="KW-0677">Repeat</keyword>
<keyword id="KW-0762">Sugar transport</keyword>
<keyword id="KW-1278">Translocase</keyword>
<keyword id="KW-0813">Transport</keyword>
<name>MGLA_VIBCH</name>
<accession>Q9KSD1</accession>
<sequence>MVNQTHEFLLEMTGVSKEFPGVKALDKVNLKVRPHSVHALMGENGAGKSTLLKCLFGIYEKDEGDIIFLGQHVNFSSSKEALESGVSMVHQELNQVKQCSVMDNIWLGRYPTKGFFVDHDKMYRDTKAIFAELDIDIDPKVKVATLSVSQMQMLEIAKAFSYDAKVVIMDEPTSSLTEKEVNHLFTIIKKLKEKGCGVVYISHKMEEIFSICDEITILRDGQWVDTRPLKGLDMDKIISMMVGRELTQRFPEKSNEPKNVILEVKNLTALNQPSIQDISFELRAGEILGVAGLVGSRRTDIVETIFGVRERSAGHILLHGREMKNHDAHEAIRNGFALVTEERRSTGIYSNLDITFNSLVANVDEYKTPYGLLSDKKMKSDTQWVIDSMRVKTPSHQTHIGSLSGGNQQKVIIGRWLLTQPEILMLDEPTRGIDVGAKYEIYQLILELAKKDKGIIIISSEMPELLGITDRIMVMSNGRNAGIVNTKQTSQNEILELASRYL</sequence>
<reference key="1">
    <citation type="journal article" date="2000" name="Nature">
        <title>DNA sequence of both chromosomes of the cholera pathogen Vibrio cholerae.</title>
        <authorList>
            <person name="Heidelberg J.F."/>
            <person name="Eisen J.A."/>
            <person name="Nelson W.C."/>
            <person name="Clayton R.A."/>
            <person name="Gwinn M.L."/>
            <person name="Dodson R.J."/>
            <person name="Haft D.H."/>
            <person name="Hickey E.K."/>
            <person name="Peterson J.D."/>
            <person name="Umayam L.A."/>
            <person name="Gill S.R."/>
            <person name="Nelson K.E."/>
            <person name="Read T.D."/>
            <person name="Tettelin H."/>
            <person name="Richardson D.L."/>
            <person name="Ermolaeva M.D."/>
            <person name="Vamathevan J.J."/>
            <person name="Bass S."/>
            <person name="Qin H."/>
            <person name="Dragoi I."/>
            <person name="Sellers P."/>
            <person name="McDonald L.A."/>
            <person name="Utterback T.R."/>
            <person name="Fleischmann R.D."/>
            <person name="Nierman W.C."/>
            <person name="White O."/>
            <person name="Salzberg S.L."/>
            <person name="Smith H.O."/>
            <person name="Colwell R.R."/>
            <person name="Mekalanos J.J."/>
            <person name="Venter J.C."/>
            <person name="Fraser C.M."/>
        </authorList>
    </citation>
    <scope>NUCLEOTIDE SEQUENCE [LARGE SCALE GENOMIC DNA]</scope>
    <source>
        <strain>ATCC 39315 / El Tor Inaba N16961</strain>
    </source>
</reference>
<proteinExistence type="inferred from homology"/>